<gene>
    <name evidence="1" type="primary">sfsA</name>
    <name type="ordered locus">CPE0593</name>
</gene>
<protein>
    <recommendedName>
        <fullName evidence="1">Sugar fermentation stimulation protein homolog</fullName>
    </recommendedName>
</protein>
<evidence type="ECO:0000255" key="1">
    <source>
        <dbReference type="HAMAP-Rule" id="MF_00095"/>
    </source>
</evidence>
<feature type="chain" id="PRO_0000152278" description="Sugar fermentation stimulation protein homolog">
    <location>
        <begin position="1"/>
        <end position="230"/>
    </location>
</feature>
<organism>
    <name type="scientific">Clostridium perfringens (strain 13 / Type A)</name>
    <dbReference type="NCBI Taxonomy" id="195102"/>
    <lineage>
        <taxon>Bacteria</taxon>
        <taxon>Bacillati</taxon>
        <taxon>Bacillota</taxon>
        <taxon>Clostridia</taxon>
        <taxon>Eubacteriales</taxon>
        <taxon>Clostridiaceae</taxon>
        <taxon>Clostridium</taxon>
    </lineage>
</organism>
<keyword id="KW-1185">Reference proteome</keyword>
<sequence length="230" mass="26405">MKYNSVIRKAIFLRRPNRFQAYVVLDDEELLVHVPNTGRCREILKEGCTVLLRKGTTPNRKTPYDLIAAYKGEVLINIDSQIPNKVVEEALRNKKIEKLVNFNNISREKTFGNSRFDFKLQDDNENTYFLEVKGVTLEENGETRFPDAPTERGKKHILELIEIKKLGMGAGIIFLIQIDNVNKFSPNDETDPKFGEALRLAKKEGVDIFAYNCKVTEEEIELLNSVEIVL</sequence>
<dbReference type="EMBL" id="BA000016">
    <property type="protein sequence ID" value="BAB80299.1"/>
    <property type="molecule type" value="Genomic_DNA"/>
</dbReference>
<dbReference type="RefSeq" id="WP_011009916.1">
    <property type="nucleotide sequence ID" value="NC_003366.1"/>
</dbReference>
<dbReference type="SMR" id="Q8XMU5"/>
<dbReference type="STRING" id="195102.gene:10489854"/>
<dbReference type="KEGG" id="cpe:CPE0593"/>
<dbReference type="HOGENOM" id="CLU_052299_1_0_9"/>
<dbReference type="Proteomes" id="UP000000818">
    <property type="component" value="Chromosome"/>
</dbReference>
<dbReference type="GO" id="GO:0003677">
    <property type="term" value="F:DNA binding"/>
    <property type="evidence" value="ECO:0007669"/>
    <property type="project" value="InterPro"/>
</dbReference>
<dbReference type="CDD" id="cd22359">
    <property type="entry name" value="SfsA-like_bacterial"/>
    <property type="match status" value="1"/>
</dbReference>
<dbReference type="FunFam" id="2.40.50.580:FF:000002">
    <property type="entry name" value="Sugar fermentation stimulation protein homolog"/>
    <property type="match status" value="1"/>
</dbReference>
<dbReference type="Gene3D" id="2.40.50.580">
    <property type="match status" value="1"/>
</dbReference>
<dbReference type="Gene3D" id="3.40.1350.60">
    <property type="match status" value="1"/>
</dbReference>
<dbReference type="HAMAP" id="MF_00095">
    <property type="entry name" value="SfsA"/>
    <property type="match status" value="1"/>
</dbReference>
<dbReference type="InterPro" id="IPR005224">
    <property type="entry name" value="SfsA"/>
</dbReference>
<dbReference type="InterPro" id="IPR040452">
    <property type="entry name" value="SfsA_C"/>
</dbReference>
<dbReference type="InterPro" id="IPR041465">
    <property type="entry name" value="SfsA_N"/>
</dbReference>
<dbReference type="NCBIfam" id="TIGR00230">
    <property type="entry name" value="sfsA"/>
    <property type="match status" value="1"/>
</dbReference>
<dbReference type="PANTHER" id="PTHR30545">
    <property type="entry name" value="SUGAR FERMENTATION STIMULATION PROTEIN A"/>
    <property type="match status" value="1"/>
</dbReference>
<dbReference type="PANTHER" id="PTHR30545:SF2">
    <property type="entry name" value="SUGAR FERMENTATION STIMULATION PROTEIN A"/>
    <property type="match status" value="1"/>
</dbReference>
<dbReference type="Pfam" id="PF03749">
    <property type="entry name" value="SfsA"/>
    <property type="match status" value="1"/>
</dbReference>
<dbReference type="Pfam" id="PF17746">
    <property type="entry name" value="SfsA_N"/>
    <property type="match status" value="1"/>
</dbReference>
<comment type="similarity">
    <text evidence="1">Belongs to the SfsA family.</text>
</comment>
<accession>Q8XMU5</accession>
<proteinExistence type="inferred from homology"/>
<reference key="1">
    <citation type="journal article" date="2002" name="Proc. Natl. Acad. Sci. U.S.A.">
        <title>Complete genome sequence of Clostridium perfringens, an anaerobic flesh-eater.</title>
        <authorList>
            <person name="Shimizu T."/>
            <person name="Ohtani K."/>
            <person name="Hirakawa H."/>
            <person name="Ohshima K."/>
            <person name="Yamashita A."/>
            <person name="Shiba T."/>
            <person name="Ogasawara N."/>
            <person name="Hattori M."/>
            <person name="Kuhara S."/>
            <person name="Hayashi H."/>
        </authorList>
    </citation>
    <scope>NUCLEOTIDE SEQUENCE [LARGE SCALE GENOMIC DNA]</scope>
    <source>
        <strain>13 / Type A</strain>
    </source>
</reference>
<name>SFSA_CLOPE</name>